<sequence>MQKIRRDDEIIVIAGKDKGKRGKVLKVLADDRLVIGGVNLVKRHTKPNPMAGVQGGIVEKEAPLHASNVAIFNGETNKADRVGFKVEDGKKIRVFKSTQKAVDA</sequence>
<organism>
    <name type="scientific">Pseudomonas putida (strain ATCC 47054 / DSM 6125 / CFBP 8728 / NCIMB 11950 / KT2440)</name>
    <dbReference type="NCBI Taxonomy" id="160488"/>
    <lineage>
        <taxon>Bacteria</taxon>
        <taxon>Pseudomonadati</taxon>
        <taxon>Pseudomonadota</taxon>
        <taxon>Gammaproteobacteria</taxon>
        <taxon>Pseudomonadales</taxon>
        <taxon>Pseudomonadaceae</taxon>
        <taxon>Pseudomonas</taxon>
    </lineage>
</organism>
<comment type="function">
    <text evidence="1">One of two assembly initiator proteins, it binds directly to the 5'-end of the 23S rRNA, where it nucleates assembly of the 50S subunit.</text>
</comment>
<comment type="function">
    <text evidence="1">One of the proteins that surrounds the polypeptide exit tunnel on the outside of the subunit.</text>
</comment>
<comment type="subunit">
    <text evidence="1">Part of the 50S ribosomal subunit.</text>
</comment>
<comment type="similarity">
    <text evidence="1">Belongs to the universal ribosomal protein uL24 family.</text>
</comment>
<dbReference type="EMBL" id="AE015451">
    <property type="protein sequence ID" value="AAN66095.1"/>
    <property type="molecule type" value="Genomic_DNA"/>
</dbReference>
<dbReference type="RefSeq" id="NP_742631.1">
    <property type="nucleotide sequence ID" value="NC_002947.4"/>
</dbReference>
<dbReference type="RefSeq" id="WP_003255476.1">
    <property type="nucleotide sequence ID" value="NZ_CP169744.1"/>
</dbReference>
<dbReference type="SMR" id="Q88QM4"/>
<dbReference type="STRING" id="160488.PP_0465"/>
<dbReference type="PaxDb" id="160488-PP_0465"/>
<dbReference type="GeneID" id="93443971"/>
<dbReference type="KEGG" id="ppu:PP_0465"/>
<dbReference type="PATRIC" id="fig|160488.4.peg.497"/>
<dbReference type="eggNOG" id="COG0198">
    <property type="taxonomic scope" value="Bacteria"/>
</dbReference>
<dbReference type="HOGENOM" id="CLU_093315_2_2_6"/>
<dbReference type="OrthoDB" id="9807419at2"/>
<dbReference type="PhylomeDB" id="Q88QM4"/>
<dbReference type="BioCyc" id="PPUT160488:G1G01-511-MONOMER"/>
<dbReference type="Proteomes" id="UP000000556">
    <property type="component" value="Chromosome"/>
</dbReference>
<dbReference type="GO" id="GO:1990904">
    <property type="term" value="C:ribonucleoprotein complex"/>
    <property type="evidence" value="ECO:0007669"/>
    <property type="project" value="UniProtKB-KW"/>
</dbReference>
<dbReference type="GO" id="GO:0005840">
    <property type="term" value="C:ribosome"/>
    <property type="evidence" value="ECO:0007669"/>
    <property type="project" value="UniProtKB-KW"/>
</dbReference>
<dbReference type="GO" id="GO:0019843">
    <property type="term" value="F:rRNA binding"/>
    <property type="evidence" value="ECO:0007669"/>
    <property type="project" value="UniProtKB-UniRule"/>
</dbReference>
<dbReference type="GO" id="GO:0003735">
    <property type="term" value="F:structural constituent of ribosome"/>
    <property type="evidence" value="ECO:0007669"/>
    <property type="project" value="InterPro"/>
</dbReference>
<dbReference type="GO" id="GO:0006412">
    <property type="term" value="P:translation"/>
    <property type="evidence" value="ECO:0007669"/>
    <property type="project" value="UniProtKB-UniRule"/>
</dbReference>
<dbReference type="CDD" id="cd06089">
    <property type="entry name" value="KOW_RPL26"/>
    <property type="match status" value="1"/>
</dbReference>
<dbReference type="FunFam" id="2.30.30.30:FF:000004">
    <property type="entry name" value="50S ribosomal protein L24"/>
    <property type="match status" value="1"/>
</dbReference>
<dbReference type="Gene3D" id="2.30.30.30">
    <property type="match status" value="1"/>
</dbReference>
<dbReference type="HAMAP" id="MF_01326_B">
    <property type="entry name" value="Ribosomal_uL24_B"/>
    <property type="match status" value="1"/>
</dbReference>
<dbReference type="InterPro" id="IPR005824">
    <property type="entry name" value="KOW"/>
</dbReference>
<dbReference type="InterPro" id="IPR014722">
    <property type="entry name" value="Rib_uL2_dom2"/>
</dbReference>
<dbReference type="InterPro" id="IPR003256">
    <property type="entry name" value="Ribosomal_uL24"/>
</dbReference>
<dbReference type="InterPro" id="IPR005825">
    <property type="entry name" value="Ribosomal_uL24_CS"/>
</dbReference>
<dbReference type="InterPro" id="IPR041988">
    <property type="entry name" value="Ribosomal_uL24_KOW"/>
</dbReference>
<dbReference type="InterPro" id="IPR008991">
    <property type="entry name" value="Translation_prot_SH3-like_sf"/>
</dbReference>
<dbReference type="NCBIfam" id="TIGR01079">
    <property type="entry name" value="rplX_bact"/>
    <property type="match status" value="1"/>
</dbReference>
<dbReference type="PANTHER" id="PTHR12903">
    <property type="entry name" value="MITOCHONDRIAL RIBOSOMAL PROTEIN L24"/>
    <property type="match status" value="1"/>
</dbReference>
<dbReference type="Pfam" id="PF00467">
    <property type="entry name" value="KOW"/>
    <property type="match status" value="1"/>
</dbReference>
<dbReference type="Pfam" id="PF17136">
    <property type="entry name" value="ribosomal_L24"/>
    <property type="match status" value="1"/>
</dbReference>
<dbReference type="SMART" id="SM00739">
    <property type="entry name" value="KOW"/>
    <property type="match status" value="1"/>
</dbReference>
<dbReference type="SUPFAM" id="SSF50104">
    <property type="entry name" value="Translation proteins SH3-like domain"/>
    <property type="match status" value="1"/>
</dbReference>
<dbReference type="PROSITE" id="PS01108">
    <property type="entry name" value="RIBOSOMAL_L24"/>
    <property type="match status" value="1"/>
</dbReference>
<reference key="1">
    <citation type="journal article" date="2002" name="Environ. Microbiol.">
        <title>Complete genome sequence and comparative analysis of the metabolically versatile Pseudomonas putida KT2440.</title>
        <authorList>
            <person name="Nelson K.E."/>
            <person name="Weinel C."/>
            <person name="Paulsen I.T."/>
            <person name="Dodson R.J."/>
            <person name="Hilbert H."/>
            <person name="Martins dos Santos V.A.P."/>
            <person name="Fouts D.E."/>
            <person name="Gill S.R."/>
            <person name="Pop M."/>
            <person name="Holmes M."/>
            <person name="Brinkac L.M."/>
            <person name="Beanan M.J."/>
            <person name="DeBoy R.T."/>
            <person name="Daugherty S.C."/>
            <person name="Kolonay J.F."/>
            <person name="Madupu R."/>
            <person name="Nelson W.C."/>
            <person name="White O."/>
            <person name="Peterson J.D."/>
            <person name="Khouri H.M."/>
            <person name="Hance I."/>
            <person name="Chris Lee P."/>
            <person name="Holtzapple E.K."/>
            <person name="Scanlan D."/>
            <person name="Tran K."/>
            <person name="Moazzez A."/>
            <person name="Utterback T.R."/>
            <person name="Rizzo M."/>
            <person name="Lee K."/>
            <person name="Kosack D."/>
            <person name="Moestl D."/>
            <person name="Wedler H."/>
            <person name="Lauber J."/>
            <person name="Stjepandic D."/>
            <person name="Hoheisel J."/>
            <person name="Straetz M."/>
            <person name="Heim S."/>
            <person name="Kiewitz C."/>
            <person name="Eisen J.A."/>
            <person name="Timmis K.N."/>
            <person name="Duesterhoeft A."/>
            <person name="Tuemmler B."/>
            <person name="Fraser C.M."/>
        </authorList>
    </citation>
    <scope>NUCLEOTIDE SEQUENCE [LARGE SCALE GENOMIC DNA]</scope>
    <source>
        <strain>ATCC 47054 / DSM 6125 / CFBP 8728 / NCIMB 11950 / KT2440</strain>
    </source>
</reference>
<evidence type="ECO:0000255" key="1">
    <source>
        <dbReference type="HAMAP-Rule" id="MF_01326"/>
    </source>
</evidence>
<evidence type="ECO:0000305" key="2"/>
<proteinExistence type="inferred from homology"/>
<gene>
    <name evidence="1" type="primary">rplX</name>
    <name type="ordered locus">PP_0465</name>
</gene>
<protein>
    <recommendedName>
        <fullName evidence="1">Large ribosomal subunit protein uL24</fullName>
    </recommendedName>
    <alternativeName>
        <fullName evidence="2">50S ribosomal protein L24</fullName>
    </alternativeName>
</protein>
<feature type="chain" id="PRO_0000130698" description="Large ribosomal subunit protein uL24">
    <location>
        <begin position="1"/>
        <end position="104"/>
    </location>
</feature>
<keyword id="KW-1185">Reference proteome</keyword>
<keyword id="KW-0687">Ribonucleoprotein</keyword>
<keyword id="KW-0689">Ribosomal protein</keyword>
<keyword id="KW-0694">RNA-binding</keyword>
<keyword id="KW-0699">rRNA-binding</keyword>
<accession>Q88QM4</accession>
<name>RL24_PSEPK</name>